<protein>
    <recommendedName>
        <fullName>Sperm protamine P1-type</fullName>
    </recommendedName>
    <alternativeName>
        <fullName>Protamine II</fullName>
    </alternativeName>
</protein>
<sequence length="57" mass="7669">MARYRHNRSRSRSRHRRRRRGHRGGRYRRRRRRGRYGHRRHHRGHSRRRRKRRRSRH</sequence>
<dbReference type="PIR" id="C58213">
    <property type="entry name" value="C58213"/>
</dbReference>
<dbReference type="GO" id="GO:0000786">
    <property type="term" value="C:nucleosome"/>
    <property type="evidence" value="ECO:0007669"/>
    <property type="project" value="UniProtKB-KW"/>
</dbReference>
<dbReference type="GO" id="GO:0005634">
    <property type="term" value="C:nucleus"/>
    <property type="evidence" value="ECO:0007669"/>
    <property type="project" value="UniProtKB-SubCell"/>
</dbReference>
<dbReference type="GO" id="GO:0003677">
    <property type="term" value="F:DNA binding"/>
    <property type="evidence" value="ECO:0007669"/>
    <property type="project" value="UniProtKB-KW"/>
</dbReference>
<dbReference type="GO" id="GO:0030261">
    <property type="term" value="P:chromosome condensation"/>
    <property type="evidence" value="ECO:0007669"/>
    <property type="project" value="UniProtKB-KW"/>
</dbReference>
<dbReference type="GO" id="GO:0035092">
    <property type="term" value="P:sperm DNA condensation"/>
    <property type="evidence" value="ECO:0007669"/>
    <property type="project" value="InterPro"/>
</dbReference>
<dbReference type="InterPro" id="IPR000221">
    <property type="entry name" value="Protamine_P1"/>
</dbReference>
<dbReference type="PROSITE" id="PS00048">
    <property type="entry name" value="PROTAMINE_P1"/>
    <property type="match status" value="1"/>
</dbReference>
<name>HSP1_ALLMI</name>
<accession>Q7LZB6</accession>
<proteinExistence type="evidence at protein level"/>
<organism>
    <name type="scientific">Alligator mississippiensis</name>
    <name type="common">American alligator</name>
    <dbReference type="NCBI Taxonomy" id="8496"/>
    <lineage>
        <taxon>Eukaryota</taxon>
        <taxon>Metazoa</taxon>
        <taxon>Chordata</taxon>
        <taxon>Craniata</taxon>
        <taxon>Vertebrata</taxon>
        <taxon>Euteleostomi</taxon>
        <taxon>Archelosauria</taxon>
        <taxon>Archosauria</taxon>
        <taxon>Crocodylia</taxon>
        <taxon>Alligatoridae</taxon>
        <taxon>Alligatorinae</taxon>
        <taxon>Alligator</taxon>
    </lineage>
</organism>
<evidence type="ECO:0000250" key="1"/>
<evidence type="ECO:0000256" key="2">
    <source>
        <dbReference type="SAM" id="MobiDB-lite"/>
    </source>
</evidence>
<evidence type="ECO:0000269" key="3">
    <source>
    </source>
</evidence>
<evidence type="ECO:0000305" key="4"/>
<reference key="1">
    <citation type="journal article" date="1996" name="J. Biol. Chem.">
        <title>Protamines of reptiles.</title>
        <authorList>
            <person name="Hunt J.G."/>
            <person name="Kasinsky H.E."/>
            <person name="Elsey R.M."/>
            <person name="Wright C.L."/>
            <person name="Rice P."/>
            <person name="Bell J.E."/>
            <person name="Sharp D.J."/>
            <person name="Kiss A.J."/>
            <person name="Hunt D.F."/>
            <person name="Arnott D.P."/>
            <person name="Russ M.M."/>
            <person name="Shabanowitz J."/>
            <person name="Ausio J."/>
        </authorList>
    </citation>
    <scope>PROTEIN SEQUENCE OF 2-57</scope>
    <source>
        <tissue>Sperm</tissue>
    </source>
</reference>
<comment type="function">
    <text evidence="1">Protamines substitute for histones in the chromatin of sperm during the haploid phase of spermatogenesis. They compact sperm DNA into a highly condensed, stable and inactive complex (By similarity).</text>
</comment>
<comment type="subcellular location">
    <subcellularLocation>
        <location evidence="1">Nucleus</location>
    </subcellularLocation>
    <subcellularLocation>
        <location evidence="1">Chromosome</location>
    </subcellularLocation>
</comment>
<comment type="tissue specificity">
    <text>Testis.</text>
</comment>
<comment type="similarity">
    <text evidence="4">Belongs to the protamine P1 family.</text>
</comment>
<keyword id="KW-0158">Chromosome</keyword>
<keyword id="KW-0217">Developmental protein</keyword>
<keyword id="KW-0221">Differentiation</keyword>
<keyword id="KW-0903">Direct protein sequencing</keyword>
<keyword id="KW-0226">DNA condensation</keyword>
<keyword id="KW-0238">DNA-binding</keyword>
<keyword id="KW-0544">Nucleosome core</keyword>
<keyword id="KW-0539">Nucleus</keyword>
<keyword id="KW-0744">Spermatogenesis</keyword>
<feature type="initiator methionine" description="Removed" evidence="3">
    <location>
        <position position="1"/>
    </location>
</feature>
<feature type="chain" id="PRO_0000191591" description="Sperm protamine P1-type">
    <location>
        <begin position="2"/>
        <end position="57"/>
    </location>
</feature>
<feature type="region of interest" description="Disordered" evidence="2">
    <location>
        <begin position="1"/>
        <end position="57"/>
    </location>
</feature>